<evidence type="ECO:0000255" key="1">
    <source>
        <dbReference type="HAMAP-Rule" id="MF_01392"/>
    </source>
</evidence>
<organism>
    <name type="scientific">Thalassiosira pseudonana</name>
    <name type="common">Marine diatom</name>
    <name type="synonym">Cyclotella nana</name>
    <dbReference type="NCBI Taxonomy" id="35128"/>
    <lineage>
        <taxon>Eukaryota</taxon>
        <taxon>Sar</taxon>
        <taxon>Stramenopiles</taxon>
        <taxon>Ochrophyta</taxon>
        <taxon>Bacillariophyta</taxon>
        <taxon>Coscinodiscophyceae</taxon>
        <taxon>Thalassiosirophycidae</taxon>
        <taxon>Thalassiosirales</taxon>
        <taxon>Thalassiosiraceae</taxon>
        <taxon>Thalassiosira</taxon>
    </lineage>
</organism>
<geneLocation type="chloroplast"/>
<gene>
    <name evidence="1" type="primary">ccs1</name>
</gene>
<keyword id="KW-0150">Chloroplast</keyword>
<keyword id="KW-0201">Cytochrome c-type biogenesis</keyword>
<keyword id="KW-0472">Membrane</keyword>
<keyword id="KW-0934">Plastid</keyword>
<keyword id="KW-0793">Thylakoid</keyword>
<keyword id="KW-0812">Transmembrane</keyword>
<keyword id="KW-1133">Transmembrane helix</keyword>
<comment type="function">
    <text evidence="1">Required during biogenesis of c-type cytochromes (cytochrome c6 and cytochrome f) at the step of heme attachment.</text>
</comment>
<comment type="subunit">
    <text evidence="1">May interact with CcsA.</text>
</comment>
<comment type="subcellular location">
    <subcellularLocation>
        <location evidence="1">Plastid</location>
        <location evidence="1">Chloroplast thylakoid membrane</location>
        <topology evidence="1">Multi-pass membrane protein</topology>
    </subcellularLocation>
</comment>
<comment type="similarity">
    <text evidence="1">Belongs to the Ccs1/CcsB family.</text>
</comment>
<proteinExistence type="inferred from homology"/>
<accession>A0T0W1</accession>
<dbReference type="EMBL" id="EF067921">
    <property type="protein sequence ID" value="ABK20796.1"/>
    <property type="molecule type" value="Genomic_DNA"/>
</dbReference>
<dbReference type="EMBL" id="EF067921">
    <property type="protein sequence ID" value="ABK20844.1"/>
    <property type="molecule type" value="Genomic_DNA"/>
</dbReference>
<dbReference type="RefSeq" id="YP_874573.1">
    <property type="nucleotide sequence ID" value="NC_008589.1"/>
</dbReference>
<dbReference type="RefSeq" id="YP_874621.1">
    <property type="nucleotide sequence ID" value="NC_008589.1"/>
</dbReference>
<dbReference type="STRING" id="35128.A0T0W1"/>
<dbReference type="GeneID" id="4524823"/>
<dbReference type="GeneID" id="4524890"/>
<dbReference type="InParanoid" id="A0T0W1"/>
<dbReference type="GO" id="GO:0009535">
    <property type="term" value="C:chloroplast thylakoid membrane"/>
    <property type="evidence" value="ECO:0007669"/>
    <property type="project" value="UniProtKB-SubCell"/>
</dbReference>
<dbReference type="GO" id="GO:0017004">
    <property type="term" value="P:cytochrome complex assembly"/>
    <property type="evidence" value="ECO:0007669"/>
    <property type="project" value="UniProtKB-UniRule"/>
</dbReference>
<dbReference type="HAMAP" id="MF_01392">
    <property type="entry name" value="CytC_Ccs1"/>
    <property type="match status" value="1"/>
</dbReference>
<dbReference type="InterPro" id="IPR023494">
    <property type="entry name" value="Cyt_c_bgen_Ccs1/CcsB/ResB"/>
</dbReference>
<dbReference type="InterPro" id="IPR007816">
    <property type="entry name" value="ResB-like_domain"/>
</dbReference>
<dbReference type="PANTHER" id="PTHR31566">
    <property type="entry name" value="CYTOCHROME C BIOGENESIS PROTEIN CCS1, CHLOROPLASTIC"/>
    <property type="match status" value="1"/>
</dbReference>
<dbReference type="PANTHER" id="PTHR31566:SF0">
    <property type="entry name" value="CYTOCHROME C BIOGENESIS PROTEIN CCS1, CHLOROPLASTIC"/>
    <property type="match status" value="1"/>
</dbReference>
<dbReference type="Pfam" id="PF05140">
    <property type="entry name" value="ResB"/>
    <property type="match status" value="2"/>
</dbReference>
<reference key="1">
    <citation type="journal article" date="2007" name="Mol. Genet. Genomics">
        <title>Chloroplast genomes of the diatoms Phaeodactylum tricornutum and Thalassiosira pseudonana: comparison with other plastid genomes of the red lineage.</title>
        <authorList>
            <person name="Oudot-Le Secq M.-P."/>
            <person name="Grimwood J."/>
            <person name="Shapiro H."/>
            <person name="Armbrust E.V."/>
            <person name="Bowler C."/>
            <person name="Green B.R."/>
        </authorList>
    </citation>
    <scope>NUCLEOTIDE SEQUENCE [LARGE SCALE GENOMIC DNA]</scope>
    <source>
        <strain>CCMP1335 / NEPCC58 / CCAP 1085/12</strain>
    </source>
</reference>
<sequence>MKQNIFKSIADLRFAIFILLVIAAFSVIGTVIEQDQSIETYKLNYPLTNRVFGFLSWDIILKFGLDHVYKTWWFITLILLFGISLLTCTLLQQFPSLKIARRCQFFRTTQQFCRLNISTNLKHLSFSQLLFKIKENNYSIFQQKNIIYCYKGLIGRIAPIIVHFSMIIILIGAIIGSLSGFKAQEIVPKTETFHIQNVLNNGQFTFIPKVSVRINDFWITYTKQTTITQFYSDLSILNIDGNEIDRQTIFVNSPAKYNGIDYYQTDWNIIGLRLRMQDSSIFQYPFINLPNTQEKLWLTWISTNQQLNDGLTILIDNLQGYCSVYNKVGKFIGNLELNESLKIENPITLIDILSSTGLQIKADPGILLIYLGFLFLMISTLISYITYSQIWIVQDKNKIFIGGNTTRATFEFELEFLKLIK</sequence>
<name>CCS1_THAPS</name>
<protein>
    <recommendedName>
        <fullName evidence="1">Cytochrome c biogenesis protein Ccs1</fullName>
    </recommendedName>
</protein>
<feature type="chain" id="PRO_0000363647" description="Cytochrome c biogenesis protein Ccs1">
    <location>
        <begin position="1"/>
        <end position="421"/>
    </location>
</feature>
<feature type="transmembrane region" description="Helical" evidence="1">
    <location>
        <begin position="12"/>
        <end position="32"/>
    </location>
</feature>
<feature type="transmembrane region" description="Helical" evidence="1">
    <location>
        <begin position="71"/>
        <end position="91"/>
    </location>
</feature>
<feature type="transmembrane region" description="Helical" evidence="1">
    <location>
        <begin position="157"/>
        <end position="177"/>
    </location>
</feature>